<comment type="similarity">
    <text evidence="1">Belongs to the bacterial ribosomal protein bL35 family.</text>
</comment>
<feature type="chain" id="PRO_1000127428" description="Large ribosomal subunit protein bL35">
    <location>
        <begin position="1"/>
        <end position="65"/>
    </location>
</feature>
<proteinExistence type="inferred from homology"/>
<protein>
    <recommendedName>
        <fullName evidence="1">Large ribosomal subunit protein bL35</fullName>
    </recommendedName>
    <alternativeName>
        <fullName evidence="2">50S ribosomal protein L35</fullName>
    </alternativeName>
</protein>
<keyword id="KW-0687">Ribonucleoprotein</keyword>
<keyword id="KW-0689">Ribosomal protein</keyword>
<accession>B2SUM1</accession>
<dbReference type="EMBL" id="CP000967">
    <property type="protein sequence ID" value="ACD59994.1"/>
    <property type="molecule type" value="Genomic_DNA"/>
</dbReference>
<dbReference type="RefSeq" id="WP_002811096.1">
    <property type="nucleotide sequence ID" value="NC_010717.2"/>
</dbReference>
<dbReference type="SMR" id="B2SUM1"/>
<dbReference type="GeneID" id="98193709"/>
<dbReference type="KEGG" id="xop:PXO_01385"/>
<dbReference type="eggNOG" id="COG0291">
    <property type="taxonomic scope" value="Bacteria"/>
</dbReference>
<dbReference type="HOGENOM" id="CLU_169643_4_3_6"/>
<dbReference type="Proteomes" id="UP000001740">
    <property type="component" value="Chromosome"/>
</dbReference>
<dbReference type="GO" id="GO:0022625">
    <property type="term" value="C:cytosolic large ribosomal subunit"/>
    <property type="evidence" value="ECO:0007669"/>
    <property type="project" value="TreeGrafter"/>
</dbReference>
<dbReference type="GO" id="GO:0003735">
    <property type="term" value="F:structural constituent of ribosome"/>
    <property type="evidence" value="ECO:0007669"/>
    <property type="project" value="InterPro"/>
</dbReference>
<dbReference type="GO" id="GO:0006412">
    <property type="term" value="P:translation"/>
    <property type="evidence" value="ECO:0007669"/>
    <property type="project" value="UniProtKB-UniRule"/>
</dbReference>
<dbReference type="FunFam" id="4.10.410.60:FF:000001">
    <property type="entry name" value="50S ribosomal protein L35"/>
    <property type="match status" value="1"/>
</dbReference>
<dbReference type="Gene3D" id="4.10.410.60">
    <property type="match status" value="1"/>
</dbReference>
<dbReference type="HAMAP" id="MF_00514">
    <property type="entry name" value="Ribosomal_bL35"/>
    <property type="match status" value="1"/>
</dbReference>
<dbReference type="InterPro" id="IPR001706">
    <property type="entry name" value="Ribosomal_bL35"/>
</dbReference>
<dbReference type="InterPro" id="IPR021137">
    <property type="entry name" value="Ribosomal_bL35-like"/>
</dbReference>
<dbReference type="InterPro" id="IPR018265">
    <property type="entry name" value="Ribosomal_bL35_CS"/>
</dbReference>
<dbReference type="InterPro" id="IPR037229">
    <property type="entry name" value="Ribosomal_bL35_sf"/>
</dbReference>
<dbReference type="NCBIfam" id="TIGR00001">
    <property type="entry name" value="rpmI_bact"/>
    <property type="match status" value="1"/>
</dbReference>
<dbReference type="PANTHER" id="PTHR33343">
    <property type="entry name" value="54S RIBOSOMAL PROTEIN BL35M"/>
    <property type="match status" value="1"/>
</dbReference>
<dbReference type="PANTHER" id="PTHR33343:SF1">
    <property type="entry name" value="LARGE RIBOSOMAL SUBUNIT PROTEIN BL35M"/>
    <property type="match status" value="1"/>
</dbReference>
<dbReference type="Pfam" id="PF01632">
    <property type="entry name" value="Ribosomal_L35p"/>
    <property type="match status" value="1"/>
</dbReference>
<dbReference type="PRINTS" id="PR00064">
    <property type="entry name" value="RIBOSOMALL35"/>
</dbReference>
<dbReference type="SUPFAM" id="SSF143034">
    <property type="entry name" value="L35p-like"/>
    <property type="match status" value="1"/>
</dbReference>
<dbReference type="PROSITE" id="PS00936">
    <property type="entry name" value="RIBOSOMAL_L35"/>
    <property type="match status" value="1"/>
</dbReference>
<sequence>MPKIKTNRAAAKRFRKTASGKYKCGHANRSHILTKKATKRKRNLRQTNHVRAEDAGRLDRMLPYL</sequence>
<organism>
    <name type="scientific">Xanthomonas oryzae pv. oryzae (strain PXO99A)</name>
    <dbReference type="NCBI Taxonomy" id="360094"/>
    <lineage>
        <taxon>Bacteria</taxon>
        <taxon>Pseudomonadati</taxon>
        <taxon>Pseudomonadota</taxon>
        <taxon>Gammaproteobacteria</taxon>
        <taxon>Lysobacterales</taxon>
        <taxon>Lysobacteraceae</taxon>
        <taxon>Xanthomonas</taxon>
    </lineage>
</organism>
<name>RL35_XANOP</name>
<gene>
    <name evidence="1" type="primary">rpmI</name>
    <name type="ordered locus">PXO_01385</name>
</gene>
<evidence type="ECO:0000255" key="1">
    <source>
        <dbReference type="HAMAP-Rule" id="MF_00514"/>
    </source>
</evidence>
<evidence type="ECO:0000305" key="2"/>
<reference key="1">
    <citation type="journal article" date="2008" name="BMC Genomics">
        <title>Genome sequence and rapid evolution of the rice pathogen Xanthomonas oryzae pv. oryzae PXO99A.</title>
        <authorList>
            <person name="Salzberg S.L."/>
            <person name="Sommer D.D."/>
            <person name="Schatz M.C."/>
            <person name="Phillippy A.M."/>
            <person name="Rabinowicz P.D."/>
            <person name="Tsuge S."/>
            <person name="Furutani A."/>
            <person name="Ochiai H."/>
            <person name="Delcher A.L."/>
            <person name="Kelley D."/>
            <person name="Madupu R."/>
            <person name="Puiu D."/>
            <person name="Radune D."/>
            <person name="Shumway M."/>
            <person name="Trapnell C."/>
            <person name="Aparna G."/>
            <person name="Jha G."/>
            <person name="Pandey A."/>
            <person name="Patil P.B."/>
            <person name="Ishihara H."/>
            <person name="Meyer D.F."/>
            <person name="Szurek B."/>
            <person name="Verdier V."/>
            <person name="Koebnik R."/>
            <person name="Dow J.M."/>
            <person name="Ryan R.P."/>
            <person name="Hirata H."/>
            <person name="Tsuyumu S."/>
            <person name="Won Lee S."/>
            <person name="Seo Y.-S."/>
            <person name="Sriariyanum M."/>
            <person name="Ronald P.C."/>
            <person name="Sonti R.V."/>
            <person name="Van Sluys M.-A."/>
            <person name="Leach J.E."/>
            <person name="White F.F."/>
            <person name="Bogdanove A.J."/>
        </authorList>
    </citation>
    <scope>NUCLEOTIDE SEQUENCE [LARGE SCALE GENOMIC DNA]</scope>
    <source>
        <strain>PXO99A</strain>
    </source>
</reference>